<protein>
    <recommendedName>
        <fullName>Cytotoxin 3</fullName>
    </recommendedName>
    <alternativeName>
        <fullName>Toxin CM-8/CM-8A</fullName>
    </alternativeName>
</protein>
<feature type="chain" id="PRO_0000093487" description="Cytotoxin 3" evidence="3">
    <location>
        <begin position="1"/>
        <end position="60"/>
    </location>
</feature>
<feature type="disulfide bond" evidence="1">
    <location>
        <begin position="3"/>
        <end position="21"/>
    </location>
</feature>
<feature type="disulfide bond" evidence="1">
    <location>
        <begin position="14"/>
        <end position="38"/>
    </location>
</feature>
<feature type="disulfide bond" evidence="1">
    <location>
        <begin position="42"/>
        <end position="53"/>
    </location>
</feature>
<feature type="disulfide bond" evidence="1">
    <location>
        <begin position="54"/>
        <end position="59"/>
    </location>
</feature>
<feature type="sequence variant" description="In toxin CM-8A.">
    <original>Y</original>
    <variation>H</variation>
    <location>
        <position position="4"/>
    </location>
</feature>
<dbReference type="PIR" id="A01723">
    <property type="entry name" value="H3NJ3E"/>
</dbReference>
<dbReference type="PIR" id="B01723">
    <property type="entry name" value="H3NJME"/>
</dbReference>
<dbReference type="SMR" id="P01459"/>
<dbReference type="GO" id="GO:0005576">
    <property type="term" value="C:extracellular region"/>
    <property type="evidence" value="ECO:0007669"/>
    <property type="project" value="UniProtKB-SubCell"/>
</dbReference>
<dbReference type="GO" id="GO:0016020">
    <property type="term" value="C:membrane"/>
    <property type="evidence" value="ECO:0007669"/>
    <property type="project" value="UniProtKB-KW"/>
</dbReference>
<dbReference type="GO" id="GO:0044218">
    <property type="term" value="C:other organism cell membrane"/>
    <property type="evidence" value="ECO:0007669"/>
    <property type="project" value="UniProtKB-KW"/>
</dbReference>
<dbReference type="GO" id="GO:0090729">
    <property type="term" value="F:toxin activity"/>
    <property type="evidence" value="ECO:0007669"/>
    <property type="project" value="UniProtKB-KW"/>
</dbReference>
<dbReference type="GO" id="GO:0031640">
    <property type="term" value="P:killing of cells of another organism"/>
    <property type="evidence" value="ECO:0007669"/>
    <property type="project" value="UniProtKB-KW"/>
</dbReference>
<dbReference type="CDD" id="cd00206">
    <property type="entry name" value="TFP_snake_toxin"/>
    <property type="match status" value="1"/>
</dbReference>
<dbReference type="FunFam" id="2.10.60.10:FF:000024">
    <property type="entry name" value="Cytotoxin 1"/>
    <property type="match status" value="1"/>
</dbReference>
<dbReference type="Gene3D" id="2.10.60.10">
    <property type="entry name" value="CD59"/>
    <property type="match status" value="1"/>
</dbReference>
<dbReference type="InterPro" id="IPR003572">
    <property type="entry name" value="Cytotoxin_Cobra"/>
</dbReference>
<dbReference type="InterPro" id="IPR003571">
    <property type="entry name" value="Snake_3FTx"/>
</dbReference>
<dbReference type="InterPro" id="IPR045860">
    <property type="entry name" value="Snake_toxin-like_sf"/>
</dbReference>
<dbReference type="InterPro" id="IPR018354">
    <property type="entry name" value="Snake_toxin_con_site"/>
</dbReference>
<dbReference type="InterPro" id="IPR054131">
    <property type="entry name" value="Toxin_cobra-type"/>
</dbReference>
<dbReference type="Pfam" id="PF21947">
    <property type="entry name" value="Toxin_cobra-type"/>
    <property type="match status" value="1"/>
</dbReference>
<dbReference type="PRINTS" id="PR00282">
    <property type="entry name" value="CYTOTOXIN"/>
</dbReference>
<dbReference type="SUPFAM" id="SSF57302">
    <property type="entry name" value="Snake toxin-like"/>
    <property type="match status" value="1"/>
</dbReference>
<dbReference type="PROSITE" id="PS00272">
    <property type="entry name" value="SNAKE_TOXIN"/>
    <property type="match status" value="1"/>
</dbReference>
<organism>
    <name type="scientific">Naja annulifera</name>
    <name type="common">Banded Egyptian cobra</name>
    <name type="synonym">Naja haje annulifera</name>
    <dbReference type="NCBI Taxonomy" id="96794"/>
    <lineage>
        <taxon>Eukaryota</taxon>
        <taxon>Metazoa</taxon>
        <taxon>Chordata</taxon>
        <taxon>Craniata</taxon>
        <taxon>Vertebrata</taxon>
        <taxon>Euteleostomi</taxon>
        <taxon>Lepidosauria</taxon>
        <taxon>Squamata</taxon>
        <taxon>Bifurcata</taxon>
        <taxon>Unidentata</taxon>
        <taxon>Episquamata</taxon>
        <taxon>Toxicofera</taxon>
        <taxon>Serpentes</taxon>
        <taxon>Colubroidea</taxon>
        <taxon>Elapidae</taxon>
        <taxon>Elapinae</taxon>
        <taxon>Naja</taxon>
    </lineage>
</organism>
<evidence type="ECO:0000250" key="1">
    <source>
        <dbReference type="UniProtKB" id="P60301"/>
    </source>
</evidence>
<evidence type="ECO:0000250" key="2">
    <source>
        <dbReference type="UniProtKB" id="P60304"/>
    </source>
</evidence>
<evidence type="ECO:0000269" key="3">
    <source>
    </source>
</evidence>
<evidence type="ECO:0000305" key="4"/>
<reference key="1">
    <citation type="journal article" date="1976" name="Eur. J. Biochem.">
        <title>Snake venom toxins. The amino-acid sequences of three toxins (CM-8, CM-11 and CM-13a) from Naja haje annulifera (Egyptian cobra) venom.</title>
        <authorList>
            <person name="Joubert F.J."/>
        </authorList>
    </citation>
    <scope>PROTEIN SEQUENCE</scope>
    <scope>SUBCELLULAR LOCATION</scope>
    <scope>TOXIC DOSE</scope>
    <source>
        <tissue>Venom</tissue>
    </source>
</reference>
<accession>P01459</accession>
<comment type="function">
    <text evidence="1 2">Shows cytolytic activity on many different cells by forming pore in lipid membranes. In vivo, increases heart rate or kills the animal by cardiac arrest. In addition, it binds to heparin with high affinity, interacts with Kv channel-interacting protein 1 (KCNIP1) in a calcium-independent manner, and binds to integrin alpha-V/beta-3 (ITGAV/ITGB3) with moderate affinity.</text>
</comment>
<comment type="subunit">
    <text evidence="1">Monomer in solution; Homodimer and oligomer in the presence of negatively charged lipids forming a pore with a size ranging between 20 and 30 Angstroms.</text>
</comment>
<comment type="subcellular location">
    <subcellularLocation>
        <location evidence="3">Secreted</location>
    </subcellularLocation>
    <subcellularLocation>
        <location evidence="1">Target cell membrane</location>
    </subcellularLocation>
</comment>
<comment type="tissue specificity">
    <text evidence="4">Expressed by the venom gland.</text>
</comment>
<comment type="toxic dose">
    <text evidence="3">LD(50) is 2.98 mg/kg by intravenous injection.</text>
</comment>
<comment type="miscellaneous">
    <text>The sequence of the major component is shown, it is called toxin CM-8 and the minor component is called toxin CM-8A.</text>
</comment>
<comment type="miscellaneous">
    <text evidence="4">Is classified as a S-type cytotoxin, since a serine residue stands at position 28 (Ser-29 in standard classification).</text>
</comment>
<comment type="similarity">
    <text evidence="4">Belongs to the three-finger toxin family. Short-chain subfamily. Type IA cytotoxin sub-subfamily.</text>
</comment>
<name>3SA3_NAJHA</name>
<keyword id="KW-0123">Cardiotoxin</keyword>
<keyword id="KW-0204">Cytolysis</keyword>
<keyword id="KW-0903">Direct protein sequencing</keyword>
<keyword id="KW-1015">Disulfide bond</keyword>
<keyword id="KW-0472">Membrane</keyword>
<keyword id="KW-0964">Secreted</keyword>
<keyword id="KW-1052">Target cell membrane</keyword>
<keyword id="KW-1053">Target membrane</keyword>
<keyword id="KW-0800">Toxin</keyword>
<sequence>LKCYKLVPPFWKTCPEGKNLCYKMYMVSTLTVPVKRGCIDVCPKNSALVKYVCCNTDKCN</sequence>
<proteinExistence type="evidence at protein level"/>